<gene>
    <name type="primary">Mrpl22</name>
</gene>
<dbReference type="EMBL" id="AABR03075027">
    <property type="status" value="NOT_ANNOTATED_CDS"/>
    <property type="molecule type" value="Genomic_DNA"/>
</dbReference>
<dbReference type="RefSeq" id="NP_001099251.1">
    <property type="nucleotide sequence ID" value="NM_001105781.1"/>
</dbReference>
<dbReference type="SMR" id="P0C2C0"/>
<dbReference type="FunCoup" id="P0C2C0">
    <property type="interactions" value="2039"/>
</dbReference>
<dbReference type="STRING" id="10116.ENSRNOP00000029336"/>
<dbReference type="PhosphoSitePlus" id="P0C2C0"/>
<dbReference type="PaxDb" id="10116-ENSRNOP00000029336"/>
<dbReference type="GeneID" id="287302"/>
<dbReference type="KEGG" id="rno:287302"/>
<dbReference type="UCSC" id="RGD:1309277">
    <property type="organism name" value="rat"/>
</dbReference>
<dbReference type="AGR" id="RGD:1309277"/>
<dbReference type="CTD" id="29093"/>
<dbReference type="RGD" id="1309277">
    <property type="gene designation" value="Mrpl22"/>
</dbReference>
<dbReference type="eggNOG" id="KOG1711">
    <property type="taxonomic scope" value="Eukaryota"/>
</dbReference>
<dbReference type="HOGENOM" id="CLU_100005_1_0_1"/>
<dbReference type="InParanoid" id="P0C2C0"/>
<dbReference type="OrthoDB" id="71481at9989"/>
<dbReference type="PhylomeDB" id="P0C2C0"/>
<dbReference type="TreeFam" id="TF315111"/>
<dbReference type="Reactome" id="R-RNO-5389840">
    <property type="pathway name" value="Mitochondrial translation elongation"/>
</dbReference>
<dbReference type="Reactome" id="R-RNO-5419276">
    <property type="pathway name" value="Mitochondrial translation termination"/>
</dbReference>
<dbReference type="PRO" id="PR:P0C2C0"/>
<dbReference type="Proteomes" id="UP000002494">
    <property type="component" value="Unplaced"/>
</dbReference>
<dbReference type="GO" id="GO:0005762">
    <property type="term" value="C:mitochondrial large ribosomal subunit"/>
    <property type="evidence" value="ECO:0000250"/>
    <property type="project" value="UniProtKB"/>
</dbReference>
<dbReference type="GO" id="GO:0005739">
    <property type="term" value="C:mitochondrion"/>
    <property type="evidence" value="ECO:0000266"/>
    <property type="project" value="RGD"/>
</dbReference>
<dbReference type="GO" id="GO:0003735">
    <property type="term" value="F:structural constituent of ribosome"/>
    <property type="evidence" value="ECO:0000318"/>
    <property type="project" value="GO_Central"/>
</dbReference>
<dbReference type="GO" id="GO:0006412">
    <property type="term" value="P:translation"/>
    <property type="evidence" value="ECO:0000318"/>
    <property type="project" value="GO_Central"/>
</dbReference>
<dbReference type="CDD" id="cd00336">
    <property type="entry name" value="Ribosomal_L22"/>
    <property type="match status" value="1"/>
</dbReference>
<dbReference type="FunFam" id="3.90.470.10:FF:000009">
    <property type="entry name" value="39S ribosomal protein L22, mitochondrial"/>
    <property type="match status" value="1"/>
</dbReference>
<dbReference type="Gene3D" id="3.90.470.10">
    <property type="entry name" value="Ribosomal protein L22/L17"/>
    <property type="match status" value="1"/>
</dbReference>
<dbReference type="InterPro" id="IPR001063">
    <property type="entry name" value="Ribosomal_uL22"/>
</dbReference>
<dbReference type="InterPro" id="IPR047867">
    <property type="entry name" value="Ribosomal_uL22_bac/org-type"/>
</dbReference>
<dbReference type="InterPro" id="IPR036394">
    <property type="entry name" value="Ribosomal_uL22_sf"/>
</dbReference>
<dbReference type="PANTHER" id="PTHR13501">
    <property type="entry name" value="CHLOROPLAST 50S RIBOSOMAL PROTEIN L22-RELATED"/>
    <property type="match status" value="1"/>
</dbReference>
<dbReference type="PANTHER" id="PTHR13501:SF8">
    <property type="entry name" value="LARGE RIBOSOMAL SUBUNIT PROTEIN UL22M"/>
    <property type="match status" value="1"/>
</dbReference>
<dbReference type="Pfam" id="PF00237">
    <property type="entry name" value="Ribosomal_L22"/>
    <property type="match status" value="1"/>
</dbReference>
<dbReference type="SUPFAM" id="SSF54843">
    <property type="entry name" value="Ribosomal protein L22"/>
    <property type="match status" value="1"/>
</dbReference>
<name>RM22_RAT</name>
<comment type="subunit">
    <text evidence="1">Component of the mitochondrial ribosome large subunit (39S) which comprises a 16S rRNA and about 50 distinct proteins.</text>
</comment>
<comment type="subcellular location">
    <subcellularLocation>
        <location evidence="2">Mitochondrion</location>
    </subcellularLocation>
</comment>
<comment type="similarity">
    <text evidence="3">Belongs to the universal ribosomal protein uL22 family.</text>
</comment>
<reference key="1">
    <citation type="journal article" date="2004" name="Nature">
        <title>Genome sequence of the Brown Norway rat yields insights into mammalian evolution.</title>
        <authorList>
            <person name="Gibbs R.A."/>
            <person name="Weinstock G.M."/>
            <person name="Metzker M.L."/>
            <person name="Muzny D.M."/>
            <person name="Sodergren E.J."/>
            <person name="Scherer S."/>
            <person name="Scott G."/>
            <person name="Steffen D."/>
            <person name="Worley K.C."/>
            <person name="Burch P.E."/>
            <person name="Okwuonu G."/>
            <person name="Hines S."/>
            <person name="Lewis L."/>
            <person name="Deramo C."/>
            <person name="Delgado O."/>
            <person name="Dugan-Rocha S."/>
            <person name="Miner G."/>
            <person name="Morgan M."/>
            <person name="Hawes A."/>
            <person name="Gill R."/>
            <person name="Holt R.A."/>
            <person name="Adams M.D."/>
            <person name="Amanatides P.G."/>
            <person name="Baden-Tillson H."/>
            <person name="Barnstead M."/>
            <person name="Chin S."/>
            <person name="Evans C.A."/>
            <person name="Ferriera S."/>
            <person name="Fosler C."/>
            <person name="Glodek A."/>
            <person name="Gu Z."/>
            <person name="Jennings D."/>
            <person name="Kraft C.L."/>
            <person name="Nguyen T."/>
            <person name="Pfannkoch C.M."/>
            <person name="Sitter C."/>
            <person name="Sutton G.G."/>
            <person name="Venter J.C."/>
            <person name="Woodage T."/>
            <person name="Smith D."/>
            <person name="Lee H.-M."/>
            <person name="Gustafson E."/>
            <person name="Cahill P."/>
            <person name="Kana A."/>
            <person name="Doucette-Stamm L."/>
            <person name="Weinstock K."/>
            <person name="Fechtel K."/>
            <person name="Weiss R.B."/>
            <person name="Dunn D.M."/>
            <person name="Green E.D."/>
            <person name="Blakesley R.W."/>
            <person name="Bouffard G.G."/>
            <person name="De Jong P.J."/>
            <person name="Osoegawa K."/>
            <person name="Zhu B."/>
            <person name="Marra M."/>
            <person name="Schein J."/>
            <person name="Bosdet I."/>
            <person name="Fjell C."/>
            <person name="Jones S."/>
            <person name="Krzywinski M."/>
            <person name="Mathewson C."/>
            <person name="Siddiqui A."/>
            <person name="Wye N."/>
            <person name="McPherson J."/>
            <person name="Zhao S."/>
            <person name="Fraser C.M."/>
            <person name="Shetty J."/>
            <person name="Shatsman S."/>
            <person name="Geer K."/>
            <person name="Chen Y."/>
            <person name="Abramzon S."/>
            <person name="Nierman W.C."/>
            <person name="Havlak P.H."/>
            <person name="Chen R."/>
            <person name="Durbin K.J."/>
            <person name="Egan A."/>
            <person name="Ren Y."/>
            <person name="Song X.-Z."/>
            <person name="Li B."/>
            <person name="Liu Y."/>
            <person name="Qin X."/>
            <person name="Cawley S."/>
            <person name="Cooney A.J."/>
            <person name="D'Souza L.M."/>
            <person name="Martin K."/>
            <person name="Wu J.Q."/>
            <person name="Gonzalez-Garay M.L."/>
            <person name="Jackson A.R."/>
            <person name="Kalafus K.J."/>
            <person name="McLeod M.P."/>
            <person name="Milosavljevic A."/>
            <person name="Virk D."/>
            <person name="Volkov A."/>
            <person name="Wheeler D.A."/>
            <person name="Zhang Z."/>
            <person name="Bailey J.A."/>
            <person name="Eichler E.E."/>
            <person name="Tuzun E."/>
            <person name="Birney E."/>
            <person name="Mongin E."/>
            <person name="Ureta-Vidal A."/>
            <person name="Woodwark C."/>
            <person name="Zdobnov E."/>
            <person name="Bork P."/>
            <person name="Suyama M."/>
            <person name="Torrents D."/>
            <person name="Alexandersson M."/>
            <person name="Trask B.J."/>
            <person name="Young J.M."/>
            <person name="Huang H."/>
            <person name="Wang H."/>
            <person name="Xing H."/>
            <person name="Daniels S."/>
            <person name="Gietzen D."/>
            <person name="Schmidt J."/>
            <person name="Stevens K."/>
            <person name="Vitt U."/>
            <person name="Wingrove J."/>
            <person name="Camara F."/>
            <person name="Mar Alba M."/>
            <person name="Abril J.F."/>
            <person name="Guigo R."/>
            <person name="Smit A."/>
            <person name="Dubchak I."/>
            <person name="Rubin E.M."/>
            <person name="Couronne O."/>
            <person name="Poliakov A."/>
            <person name="Huebner N."/>
            <person name="Ganten D."/>
            <person name="Goesele C."/>
            <person name="Hummel O."/>
            <person name="Kreitler T."/>
            <person name="Lee Y.-A."/>
            <person name="Monti J."/>
            <person name="Schulz H."/>
            <person name="Zimdahl H."/>
            <person name="Himmelbauer H."/>
            <person name="Lehrach H."/>
            <person name="Jacob H.J."/>
            <person name="Bromberg S."/>
            <person name="Gullings-Handley J."/>
            <person name="Jensen-Seaman M.I."/>
            <person name="Kwitek A.E."/>
            <person name="Lazar J."/>
            <person name="Pasko D."/>
            <person name="Tonellato P.J."/>
            <person name="Twigger S."/>
            <person name="Ponting C.P."/>
            <person name="Duarte J.M."/>
            <person name="Rice S."/>
            <person name="Goodstadt L."/>
            <person name="Beatson S.A."/>
            <person name="Emes R.D."/>
            <person name="Winter E.E."/>
            <person name="Webber C."/>
            <person name="Brandt P."/>
            <person name="Nyakatura G."/>
            <person name="Adetobi M."/>
            <person name="Chiaromonte F."/>
            <person name="Elnitski L."/>
            <person name="Eswara P."/>
            <person name="Hardison R.C."/>
            <person name="Hou M."/>
            <person name="Kolbe D."/>
            <person name="Makova K."/>
            <person name="Miller W."/>
            <person name="Nekrutenko A."/>
            <person name="Riemer C."/>
            <person name="Schwartz S."/>
            <person name="Taylor J."/>
            <person name="Yang S."/>
            <person name="Zhang Y."/>
            <person name="Lindpaintner K."/>
            <person name="Andrews T.D."/>
            <person name="Caccamo M."/>
            <person name="Clamp M."/>
            <person name="Clarke L."/>
            <person name="Curwen V."/>
            <person name="Durbin R.M."/>
            <person name="Eyras E."/>
            <person name="Searle S.M."/>
            <person name="Cooper G.M."/>
            <person name="Batzoglou S."/>
            <person name="Brudno M."/>
            <person name="Sidow A."/>
            <person name="Stone E.A."/>
            <person name="Payseur B.A."/>
            <person name="Bourque G."/>
            <person name="Lopez-Otin C."/>
            <person name="Puente X.S."/>
            <person name="Chakrabarti K."/>
            <person name="Chatterji S."/>
            <person name="Dewey C."/>
            <person name="Pachter L."/>
            <person name="Bray N."/>
            <person name="Yap V.B."/>
            <person name="Caspi A."/>
            <person name="Tesler G."/>
            <person name="Pevzner P.A."/>
            <person name="Haussler D."/>
            <person name="Roskin K.M."/>
            <person name="Baertsch R."/>
            <person name="Clawson H."/>
            <person name="Furey T.S."/>
            <person name="Hinrichs A.S."/>
            <person name="Karolchik D."/>
            <person name="Kent W.J."/>
            <person name="Rosenbloom K.R."/>
            <person name="Trumbower H."/>
            <person name="Weirauch M."/>
            <person name="Cooper D.N."/>
            <person name="Stenson P.D."/>
            <person name="Ma B."/>
            <person name="Brent M."/>
            <person name="Arumugam M."/>
            <person name="Shteynberg D."/>
            <person name="Copley R.R."/>
            <person name="Taylor M.S."/>
            <person name="Riethman H."/>
            <person name="Mudunuri U."/>
            <person name="Peterson J."/>
            <person name="Guyer M."/>
            <person name="Felsenfeld A."/>
            <person name="Old S."/>
            <person name="Mockrin S."/>
            <person name="Collins F.S."/>
        </authorList>
    </citation>
    <scope>NUCLEOTIDE SEQUENCE [LARGE SCALE GENOMIC DNA]</scope>
    <source>
        <strain>Brown Norway</strain>
    </source>
</reference>
<reference key="2">
    <citation type="journal article" date="1998" name="J. Biol. Chem.">
        <title>Mammalian mitochondrial ribosomal proteins. N-terminal amino acid sequencing, characterization, and identification of corresponding gene sequences.</title>
        <authorList>
            <person name="Goldschmidt-Reisin S."/>
            <person name="Kitakawa M."/>
            <person name="Herfurth E."/>
            <person name="Wittmann-Liebold B."/>
            <person name="Grohmann L."/>
            <person name="Graack H.-R."/>
        </authorList>
    </citation>
    <scope>PROTEIN SEQUENCE OF 41-66</scope>
    <scope>SUBCELLULAR LOCATION</scope>
</reference>
<organism>
    <name type="scientific">Rattus norvegicus</name>
    <name type="common">Rat</name>
    <dbReference type="NCBI Taxonomy" id="10116"/>
    <lineage>
        <taxon>Eukaryota</taxon>
        <taxon>Metazoa</taxon>
        <taxon>Chordata</taxon>
        <taxon>Craniata</taxon>
        <taxon>Vertebrata</taxon>
        <taxon>Euteleostomi</taxon>
        <taxon>Mammalia</taxon>
        <taxon>Eutheria</taxon>
        <taxon>Euarchontoglires</taxon>
        <taxon>Glires</taxon>
        <taxon>Rodentia</taxon>
        <taxon>Myomorpha</taxon>
        <taxon>Muroidea</taxon>
        <taxon>Muridae</taxon>
        <taxon>Murinae</taxon>
        <taxon>Rattus</taxon>
    </lineage>
</organism>
<feature type="transit peptide" description="Mitochondrion" evidence="2">
    <location>
        <begin position="1"/>
        <end position="40"/>
    </location>
</feature>
<feature type="chain" id="PRO_0000273239" description="Large ribosomal subunit protein uL22m">
    <location>
        <begin position="41"/>
        <end position="206"/>
    </location>
</feature>
<feature type="sequence conflict" description="In Ref. 2; AA sequence." evidence="3" ref="2">
    <original>P</original>
    <variation>D</variation>
    <location>
        <position position="55"/>
    </location>
</feature>
<feature type="sequence conflict" description="In Ref. 2; AA sequence." evidence="3" ref="2">
    <original>P</original>
    <variation>D</variation>
    <location>
        <position position="58"/>
    </location>
</feature>
<feature type="sequence conflict" description="In Ref. 2; AA sequence." evidence="3" ref="2">
    <original>P</original>
    <variation>D</variation>
    <location>
        <position position="61"/>
    </location>
</feature>
<feature type="sequence conflict" description="In Ref. 2; AA sequence." evidence="3" ref="2">
    <original>P</original>
    <variation>D</variation>
    <location>
        <position position="64"/>
    </location>
</feature>
<proteinExistence type="evidence at protein level"/>
<keyword id="KW-0903">Direct protein sequencing</keyword>
<keyword id="KW-0496">Mitochondrion</keyword>
<keyword id="KW-1185">Reference proteome</keyword>
<keyword id="KW-0687">Ribonucleoprotein</keyword>
<keyword id="KW-0689">Ribosomal protein</keyword>
<keyword id="KW-0809">Transit peptide</keyword>
<sequence length="206" mass="24039">MAAALLRELGALWVPNLRIWTTQMLRVLPQSCIHTSTSLDISRRWEKKNKIVYPPQLPGEPRRPAEIYHCRRQIKYSKDKMWYLAKLIRGMSIDQALAQLEFNDKKGAQIIKEVLLEAQDMAVRDHNVEFRSNLHIAESTSGRGQCLKRIRYHGRGRFGIMEKVYCHYFVKLVEGPPPRPEAPRTAVDHAKEYIQQLRSRTIIHTL</sequence>
<evidence type="ECO:0000250" key="1">
    <source>
        <dbReference type="UniProtKB" id="Q9NWU5"/>
    </source>
</evidence>
<evidence type="ECO:0000269" key="2">
    <source>
    </source>
</evidence>
<evidence type="ECO:0000305" key="3"/>
<accession>P0C2C0</accession>
<protein>
    <recommendedName>
        <fullName evidence="3">Large ribosomal subunit protein uL22m</fullName>
    </recommendedName>
    <alternativeName>
        <fullName>39S ribosomal protein L22, mitochondrial</fullName>
        <shortName>L22mt</shortName>
        <shortName>MRP-L22</shortName>
    </alternativeName>
</protein>